<feature type="chain" id="PRO_0000435774" description="Developmental and secondary metabolism regulator veA">
    <location>
        <begin position="1"/>
        <end position="555"/>
    </location>
</feature>
<feature type="domain" description="Velvet" evidence="2">
    <location>
        <begin position="25"/>
        <end position="228"/>
    </location>
</feature>
<feature type="region of interest" description="Disordered" evidence="3">
    <location>
        <begin position="1"/>
        <end position="23"/>
    </location>
</feature>
<feature type="region of interest" description="Disordered" evidence="3">
    <location>
        <begin position="39"/>
        <end position="60"/>
    </location>
</feature>
<feature type="region of interest" description="Disordered" evidence="3">
    <location>
        <begin position="234"/>
        <end position="533"/>
    </location>
</feature>
<feature type="region of interest" description="PEST" evidence="1">
    <location>
        <begin position="439"/>
        <end position="479"/>
    </location>
</feature>
<feature type="short sequence motif" description="Nuclear localization signal" evidence="1">
    <location>
        <begin position="39"/>
        <end position="44"/>
    </location>
</feature>
<feature type="compositionally biased region" description="Basic and acidic residues" evidence="3">
    <location>
        <begin position="13"/>
        <end position="23"/>
    </location>
</feature>
<feature type="compositionally biased region" description="Basic and acidic residues" evidence="3">
    <location>
        <begin position="239"/>
        <end position="258"/>
    </location>
</feature>
<feature type="compositionally biased region" description="Pro residues" evidence="3">
    <location>
        <begin position="311"/>
        <end position="331"/>
    </location>
</feature>
<feature type="compositionally biased region" description="Polar residues" evidence="3">
    <location>
        <begin position="336"/>
        <end position="372"/>
    </location>
</feature>
<feature type="compositionally biased region" description="Polar residues" evidence="3">
    <location>
        <begin position="380"/>
        <end position="389"/>
    </location>
</feature>
<feature type="compositionally biased region" description="Basic and acidic residues" evidence="3">
    <location>
        <begin position="492"/>
        <end position="503"/>
    </location>
</feature>
<feature type="compositionally biased region" description="Basic and acidic residues" evidence="3">
    <location>
        <begin position="519"/>
        <end position="533"/>
    </location>
</feature>
<comment type="function">
    <text evidence="1 4">Component of the velvet transcription factor complex that controls sexual/asexual developmental ratio in response to light, promoting sexual development in the darkness while stimulating asexual sporulation under illumination (By similarity). The velvet complex hat acts as a global regulator for secondary metabolite gene expression (By similarity). Increases spore dispersing capacity by impacting conidiophore architecture (PubMed:25367340).</text>
</comment>
<comment type="subunit">
    <text evidence="1">Component of the heterotrimeric velvet complex composed of laeA, veA and velB; VeA acting as a bridging protein between laeA and velB (By similarity).</text>
</comment>
<comment type="subcellular location">
    <subcellularLocation>
        <location evidence="4">Nucleus</location>
    </subcellularLocation>
    <subcellularLocation>
        <location evidence="4">Cytoplasm</location>
    </subcellularLocation>
    <text evidence="4">Enriched in the nucleus in the dark (PubMed:25367340).</text>
</comment>
<comment type="domain">
    <text evidence="1">The C-terminal PEST domain is a region rich in proline, glutamic acid, serine and threonine residues that is required for the light-dependent regulation of development and secondary metabolism (By similarity).</text>
</comment>
<comment type="disruption phenotype">
    <text evidence="4">Reduces nearly twofold the length and width of the conidiophore stalk and vesicle (PubMed:25367340).</text>
</comment>
<comment type="similarity">
    <text evidence="6">Belongs to the velvet family. VeA subfamily.</text>
</comment>
<organism>
    <name type="scientific">Aspergillus niger (strain ATCC 1015 / CBS 113.46 / FGSC A1144 / LSHB Ac4 / NCTC 3858a / NRRL 328 / USDA 3528.7)</name>
    <dbReference type="NCBI Taxonomy" id="380704"/>
    <lineage>
        <taxon>Eukaryota</taxon>
        <taxon>Fungi</taxon>
        <taxon>Dikarya</taxon>
        <taxon>Ascomycota</taxon>
        <taxon>Pezizomycotina</taxon>
        <taxon>Eurotiomycetes</taxon>
        <taxon>Eurotiomycetidae</taxon>
        <taxon>Eurotiales</taxon>
        <taxon>Aspergillaceae</taxon>
        <taxon>Aspergillus</taxon>
        <taxon>Aspergillus subgen. Circumdati</taxon>
    </lineage>
</organism>
<sequence length="555" mass="61318">MATRPPLSPPVNETEHSVSRITREGKRITYKLNVMQQPERARACGAGAKSSADRRPVDPPPVVELRIFESDPNDDVHKTDITFAYNANFFLFATLETARPMAQGRLAPTPTFPVLTGVPVAGVAYLDRPSQAGYFIFPDLSVRHEGIYRLSFHLYEETKDSKDADESAPIRSPMMKGKPSIPKSFLNFRLEVVSVPFTVFSAKKFPGLTTSTSLSRIIAEQGCRVRIRRDVRMRRRGDKRSDDYDFDEERSHRGRIPDRYSTPDAYANPVERPRSTSIGSVDPAFSYGPEASRRPSATEYGFSNPQAYPRAIPPAPAPAPPSSSTPTPVAPIAPSRSSSYTSHLSFGATRTQYPAPQLPGTPQSATTPTQVYSPHPTYTHARNPSTSTEYEPMPSGYPPSRLPAERSTYSKPLPPIRVLHHSDPTTYRAMANPVPPRAQTPSNAAPSLPPIASISAEYSNNLPQPPSNLAPSPNREPRGFLWDTRAAASSKRPHEDAFSHSERPLYNGMRPDNDSYPSADRRPSDVHRATLLSDRDEMAYKRANGRMATKISPAI</sequence>
<reference key="1">
    <citation type="journal article" date="2011" name="Genome Res.">
        <title>Comparative genomics of citric-acid-producing Aspergillus niger ATCC 1015 versus enzyme-producing CBS 513.88.</title>
        <authorList>
            <person name="Andersen M.R."/>
            <person name="Salazar M.P."/>
            <person name="Schaap P.J."/>
            <person name="van de Vondervoort P.J.I."/>
            <person name="Culley D."/>
            <person name="Thykaer J."/>
            <person name="Frisvad J.C."/>
            <person name="Nielsen K.F."/>
            <person name="Albang R."/>
            <person name="Albermann K."/>
            <person name="Berka R.M."/>
            <person name="Braus G.H."/>
            <person name="Braus-Stromeyer S.A."/>
            <person name="Corrochano L.M."/>
            <person name="Dai Z."/>
            <person name="van Dijck P.W.M."/>
            <person name="Hofmann G."/>
            <person name="Lasure L.L."/>
            <person name="Magnuson J.K."/>
            <person name="Menke H."/>
            <person name="Meijer M."/>
            <person name="Meijer S.L."/>
            <person name="Nielsen J.B."/>
            <person name="Nielsen M.L."/>
            <person name="van Ooyen A.J.J."/>
            <person name="Pel H.J."/>
            <person name="Poulsen L."/>
            <person name="Samson R.A."/>
            <person name="Stam H."/>
            <person name="Tsang A."/>
            <person name="van den Brink J.M."/>
            <person name="Atkins A."/>
            <person name="Aerts A."/>
            <person name="Shapiro H."/>
            <person name="Pangilinan J."/>
            <person name="Salamov A."/>
            <person name="Lou Y."/>
            <person name="Lindquist E."/>
            <person name="Lucas S."/>
            <person name="Grimwood J."/>
            <person name="Grigoriev I.V."/>
            <person name="Kubicek C.P."/>
            <person name="Martinez D."/>
            <person name="van Peij N.N.M.E."/>
            <person name="Roubos J.A."/>
            <person name="Nielsen J."/>
            <person name="Baker S.E."/>
        </authorList>
    </citation>
    <scope>NUCLEOTIDE SEQUENCE [LARGE SCALE GENOMIC DNA]</scope>
    <source>
        <strain>ATCC 1015 / CBS 113.46 / FGSC A1144 / LSHB Ac4 / NCTC 3858a / NRRL 328 / USDA 3528.7</strain>
    </source>
</reference>
<reference key="2">
    <citation type="journal article" date="2015" name="Antonie Van Leeuwenhoek">
        <title>VeA of Aspergillus niger increases spore dispersing capacity by impacting conidiophore architecture.</title>
        <authorList>
            <person name="Wang F."/>
            <person name="Dijksterhuis J."/>
            <person name="Wyatt T."/>
            <person name="Woesten H.A."/>
            <person name="Bleichrodt R.J."/>
        </authorList>
    </citation>
    <scope>FUNCTION</scope>
    <scope>DISRUPTION PHENOTYPE</scope>
    <scope>SUBCELLULAR LOCATION</scope>
</reference>
<evidence type="ECO:0000250" key="1">
    <source>
        <dbReference type="UniProtKB" id="C8VTV4"/>
    </source>
</evidence>
<evidence type="ECO:0000255" key="2">
    <source>
        <dbReference type="PROSITE-ProRule" id="PRU01165"/>
    </source>
</evidence>
<evidence type="ECO:0000256" key="3">
    <source>
        <dbReference type="SAM" id="MobiDB-lite"/>
    </source>
</evidence>
<evidence type="ECO:0000269" key="4">
    <source>
    </source>
</evidence>
<evidence type="ECO:0000303" key="5">
    <source>
    </source>
</evidence>
<evidence type="ECO:0000305" key="6"/>
<gene>
    <name evidence="5" type="primary">veA</name>
    <name type="ORF">ASPNIDRAFT_55789</name>
</gene>
<name>VEA_ASPNA</name>
<accession>G3YHA8</accession>
<protein>
    <recommendedName>
        <fullName evidence="6">Developmental and secondary metabolism regulator veA</fullName>
    </recommendedName>
    <alternativeName>
        <fullName evidence="6">Velvet complex subunit A</fullName>
    </alternativeName>
</protein>
<dbReference type="EMBL" id="ACJE01000021">
    <property type="protein sequence ID" value="EHA18105.1"/>
    <property type="molecule type" value="Genomic_DNA"/>
</dbReference>
<dbReference type="SMR" id="G3YHA8"/>
<dbReference type="STRING" id="380704.G3YHA8"/>
<dbReference type="HOGENOM" id="CLU_022491_2_0_1"/>
<dbReference type="OrthoDB" id="98343at5052"/>
<dbReference type="Proteomes" id="UP000009038">
    <property type="component" value="Unassembled WGS sequence"/>
</dbReference>
<dbReference type="GO" id="GO:0005737">
    <property type="term" value="C:cytoplasm"/>
    <property type="evidence" value="ECO:0007669"/>
    <property type="project" value="UniProtKB-SubCell"/>
</dbReference>
<dbReference type="GO" id="GO:0005634">
    <property type="term" value="C:nucleus"/>
    <property type="evidence" value="ECO:0007669"/>
    <property type="project" value="UniProtKB-SubCell"/>
</dbReference>
<dbReference type="FunFam" id="2.60.40.3960:FF:000001">
    <property type="entry name" value="Sexual development activator VeA"/>
    <property type="match status" value="1"/>
</dbReference>
<dbReference type="Gene3D" id="2.60.40.3960">
    <property type="entry name" value="Velvet domain"/>
    <property type="match status" value="1"/>
</dbReference>
<dbReference type="InterPro" id="IPR021740">
    <property type="entry name" value="Velvet"/>
</dbReference>
<dbReference type="InterPro" id="IPR037525">
    <property type="entry name" value="Velvet_dom"/>
</dbReference>
<dbReference type="InterPro" id="IPR038491">
    <property type="entry name" value="Velvet_dom_sf"/>
</dbReference>
<dbReference type="PANTHER" id="PTHR33572:SF14">
    <property type="entry name" value="DEVELOPMENTAL AND SECONDARY METABOLISM REGULATOR VEA"/>
    <property type="match status" value="1"/>
</dbReference>
<dbReference type="PANTHER" id="PTHR33572">
    <property type="entry name" value="SPORE DEVELOPMENT REGULATOR VOSA"/>
    <property type="match status" value="1"/>
</dbReference>
<dbReference type="Pfam" id="PF11754">
    <property type="entry name" value="Velvet"/>
    <property type="match status" value="2"/>
</dbReference>
<dbReference type="PROSITE" id="PS51821">
    <property type="entry name" value="VELVET"/>
    <property type="match status" value="1"/>
</dbReference>
<keyword id="KW-0963">Cytoplasm</keyword>
<keyword id="KW-0539">Nucleus</keyword>
<keyword id="KW-0804">Transcription</keyword>
<keyword id="KW-0805">Transcription regulation</keyword>
<proteinExistence type="inferred from homology"/>